<sequence>MKFNSISPNKQHHTGFTTSNNENLNQQLNQVLILLQTLQSQAKKIASFQNQTYEWNLKHHQNLKNVLKSFNRLNSIIDSKGSNNELNEKDNNEFENGVTFHQKIINTYDPLDPFSEELENLIMQIDRGLFHQLRDDSLEIIYPFILKWLKENNSLVLSLVLIWESSTKFHYLLNKKKFKEINKKILDCIVDYENKGIISTLINQNEFPFSDDEYNNLKKFLNDYS</sequence>
<protein>
    <recommendedName>
        <fullName>Putative uncharacterized protein DDB_G0268712</fullName>
    </recommendedName>
</protein>
<feature type="chain" id="PRO_0000391605" description="Putative uncharacterized protein DDB_G0268712">
    <location>
        <begin position="1"/>
        <end position="225"/>
    </location>
</feature>
<feature type="region of interest" description="Disordered" evidence="1">
    <location>
        <begin position="1"/>
        <end position="21"/>
    </location>
</feature>
<feature type="compositionally biased region" description="Polar residues" evidence="1">
    <location>
        <begin position="1"/>
        <end position="19"/>
    </location>
</feature>
<dbReference type="EMBL" id="AAFI02000004">
    <property type="protein sequence ID" value="EAL72945.1"/>
    <property type="molecule type" value="Genomic_DNA"/>
</dbReference>
<dbReference type="RefSeq" id="XP_646889.1">
    <property type="nucleotide sequence ID" value="XM_641797.1"/>
</dbReference>
<dbReference type="PaxDb" id="44689-DDB0267066"/>
<dbReference type="EnsemblProtists" id="EAL72945">
    <property type="protein sequence ID" value="EAL72945"/>
    <property type="gene ID" value="DDB_G0268712"/>
</dbReference>
<dbReference type="GeneID" id="8616574"/>
<dbReference type="KEGG" id="ddi:DDB_G0268712"/>
<dbReference type="dictyBase" id="DDB_G0268712"/>
<dbReference type="VEuPathDB" id="AmoebaDB:DDB_G0268712"/>
<dbReference type="eggNOG" id="ENOG502RHNE">
    <property type="taxonomic scope" value="Eukaryota"/>
</dbReference>
<dbReference type="HOGENOM" id="CLU_1231805_0_0_1"/>
<dbReference type="InParanoid" id="Q55EY1"/>
<dbReference type="OMA" id="CIVDYEN"/>
<dbReference type="PRO" id="PR:Q55EY1"/>
<dbReference type="Proteomes" id="UP000002195">
    <property type="component" value="Chromosome 1"/>
</dbReference>
<organism>
    <name type="scientific">Dictyostelium discoideum</name>
    <name type="common">Social amoeba</name>
    <dbReference type="NCBI Taxonomy" id="44689"/>
    <lineage>
        <taxon>Eukaryota</taxon>
        <taxon>Amoebozoa</taxon>
        <taxon>Evosea</taxon>
        <taxon>Eumycetozoa</taxon>
        <taxon>Dictyostelia</taxon>
        <taxon>Dictyosteliales</taxon>
        <taxon>Dictyosteliaceae</taxon>
        <taxon>Dictyostelium</taxon>
    </lineage>
</organism>
<name>Y8712_DICDI</name>
<gene>
    <name type="ORF">DDB_G0268712</name>
</gene>
<reference key="1">
    <citation type="journal article" date="2005" name="Nature">
        <title>The genome of the social amoeba Dictyostelium discoideum.</title>
        <authorList>
            <person name="Eichinger L."/>
            <person name="Pachebat J.A."/>
            <person name="Gloeckner G."/>
            <person name="Rajandream M.A."/>
            <person name="Sucgang R."/>
            <person name="Berriman M."/>
            <person name="Song J."/>
            <person name="Olsen R."/>
            <person name="Szafranski K."/>
            <person name="Xu Q."/>
            <person name="Tunggal B."/>
            <person name="Kummerfeld S."/>
            <person name="Madera M."/>
            <person name="Konfortov B.A."/>
            <person name="Rivero F."/>
            <person name="Bankier A.T."/>
            <person name="Lehmann R."/>
            <person name="Hamlin N."/>
            <person name="Davies R."/>
            <person name="Gaudet P."/>
            <person name="Fey P."/>
            <person name="Pilcher K."/>
            <person name="Chen G."/>
            <person name="Saunders D."/>
            <person name="Sodergren E.J."/>
            <person name="Davis P."/>
            <person name="Kerhornou A."/>
            <person name="Nie X."/>
            <person name="Hall N."/>
            <person name="Anjard C."/>
            <person name="Hemphill L."/>
            <person name="Bason N."/>
            <person name="Farbrother P."/>
            <person name="Desany B."/>
            <person name="Just E."/>
            <person name="Morio T."/>
            <person name="Rost R."/>
            <person name="Churcher C.M."/>
            <person name="Cooper J."/>
            <person name="Haydock S."/>
            <person name="van Driessche N."/>
            <person name="Cronin A."/>
            <person name="Goodhead I."/>
            <person name="Muzny D.M."/>
            <person name="Mourier T."/>
            <person name="Pain A."/>
            <person name="Lu M."/>
            <person name="Harper D."/>
            <person name="Lindsay R."/>
            <person name="Hauser H."/>
            <person name="James K.D."/>
            <person name="Quiles M."/>
            <person name="Madan Babu M."/>
            <person name="Saito T."/>
            <person name="Buchrieser C."/>
            <person name="Wardroper A."/>
            <person name="Felder M."/>
            <person name="Thangavelu M."/>
            <person name="Johnson D."/>
            <person name="Knights A."/>
            <person name="Loulseged H."/>
            <person name="Mungall K.L."/>
            <person name="Oliver K."/>
            <person name="Price C."/>
            <person name="Quail M.A."/>
            <person name="Urushihara H."/>
            <person name="Hernandez J."/>
            <person name="Rabbinowitsch E."/>
            <person name="Steffen D."/>
            <person name="Sanders M."/>
            <person name="Ma J."/>
            <person name="Kohara Y."/>
            <person name="Sharp S."/>
            <person name="Simmonds M.N."/>
            <person name="Spiegler S."/>
            <person name="Tivey A."/>
            <person name="Sugano S."/>
            <person name="White B."/>
            <person name="Walker D."/>
            <person name="Woodward J.R."/>
            <person name="Winckler T."/>
            <person name="Tanaka Y."/>
            <person name="Shaulsky G."/>
            <person name="Schleicher M."/>
            <person name="Weinstock G.M."/>
            <person name="Rosenthal A."/>
            <person name="Cox E.C."/>
            <person name="Chisholm R.L."/>
            <person name="Gibbs R.A."/>
            <person name="Loomis W.F."/>
            <person name="Platzer M."/>
            <person name="Kay R.R."/>
            <person name="Williams J.G."/>
            <person name="Dear P.H."/>
            <person name="Noegel A.A."/>
            <person name="Barrell B.G."/>
            <person name="Kuspa A."/>
        </authorList>
    </citation>
    <scope>NUCLEOTIDE SEQUENCE [LARGE SCALE GENOMIC DNA]</scope>
    <source>
        <strain>AX4</strain>
    </source>
</reference>
<proteinExistence type="predicted"/>
<evidence type="ECO:0000256" key="1">
    <source>
        <dbReference type="SAM" id="MobiDB-lite"/>
    </source>
</evidence>
<accession>Q55EY1</accession>
<keyword id="KW-1185">Reference proteome</keyword>